<keyword id="KW-1185">Reference proteome</keyword>
<keyword id="KW-0687">Ribonucleoprotein</keyword>
<keyword id="KW-0689">Ribosomal protein</keyword>
<feature type="chain" id="PRO_1000007004" description="Large ribosomal subunit protein bL12">
    <location>
        <begin position="1"/>
        <end position="125"/>
    </location>
</feature>
<gene>
    <name evidence="1" type="primary">rplL</name>
    <name type="ordered locus">ELI_14420</name>
</gene>
<comment type="function">
    <text evidence="1">Forms part of the ribosomal stalk which helps the ribosome interact with GTP-bound translation factors. Is thus essential for accurate translation.</text>
</comment>
<comment type="subunit">
    <text evidence="1">Homodimer. Part of the ribosomal stalk of the 50S ribosomal subunit. Forms a multimeric L10(L12)X complex, where L10 forms an elongated spine to which 2 to 4 L12 dimers bind in a sequential fashion. Binds GTP-bound translation factors.</text>
</comment>
<comment type="similarity">
    <text evidence="1">Belongs to the bacterial ribosomal protein bL12 family.</text>
</comment>
<proteinExistence type="inferred from homology"/>
<evidence type="ECO:0000255" key="1">
    <source>
        <dbReference type="HAMAP-Rule" id="MF_00368"/>
    </source>
</evidence>
<evidence type="ECO:0000305" key="2"/>
<reference key="1">
    <citation type="journal article" date="2009" name="J. Bacteriol.">
        <title>Complete genome sequence of Erythrobacter litoralis HTCC2594.</title>
        <authorList>
            <person name="Oh H.M."/>
            <person name="Giovannoni S.J."/>
            <person name="Ferriera S."/>
            <person name="Johnson J."/>
            <person name="Cho J.C."/>
        </authorList>
    </citation>
    <scope>NUCLEOTIDE SEQUENCE [LARGE SCALE GENOMIC DNA]</scope>
    <source>
        <strain>HTCC2594</strain>
    </source>
</reference>
<accession>Q2N5R5</accession>
<dbReference type="EMBL" id="CP000157">
    <property type="protein sequence ID" value="ABC64976.1"/>
    <property type="molecule type" value="Genomic_DNA"/>
</dbReference>
<dbReference type="RefSeq" id="WP_011415798.1">
    <property type="nucleotide sequence ID" value="NC_007722.1"/>
</dbReference>
<dbReference type="SMR" id="Q2N5R5"/>
<dbReference type="STRING" id="314225.ELI_14420"/>
<dbReference type="KEGG" id="eli:ELI_14420"/>
<dbReference type="eggNOG" id="COG0222">
    <property type="taxonomic scope" value="Bacteria"/>
</dbReference>
<dbReference type="HOGENOM" id="CLU_086499_3_0_5"/>
<dbReference type="OrthoDB" id="9811748at2"/>
<dbReference type="Proteomes" id="UP000008808">
    <property type="component" value="Chromosome"/>
</dbReference>
<dbReference type="GO" id="GO:0022625">
    <property type="term" value="C:cytosolic large ribosomal subunit"/>
    <property type="evidence" value="ECO:0007669"/>
    <property type="project" value="TreeGrafter"/>
</dbReference>
<dbReference type="GO" id="GO:0003729">
    <property type="term" value="F:mRNA binding"/>
    <property type="evidence" value="ECO:0007669"/>
    <property type="project" value="TreeGrafter"/>
</dbReference>
<dbReference type="GO" id="GO:0003735">
    <property type="term" value="F:structural constituent of ribosome"/>
    <property type="evidence" value="ECO:0007669"/>
    <property type="project" value="InterPro"/>
</dbReference>
<dbReference type="GO" id="GO:0006412">
    <property type="term" value="P:translation"/>
    <property type="evidence" value="ECO:0007669"/>
    <property type="project" value="UniProtKB-UniRule"/>
</dbReference>
<dbReference type="CDD" id="cd00387">
    <property type="entry name" value="Ribosomal_L7_L12"/>
    <property type="match status" value="1"/>
</dbReference>
<dbReference type="FunFam" id="3.30.1390.10:FF:000001">
    <property type="entry name" value="50S ribosomal protein L7/L12"/>
    <property type="match status" value="1"/>
</dbReference>
<dbReference type="Gene3D" id="3.30.1390.10">
    <property type="match status" value="1"/>
</dbReference>
<dbReference type="Gene3D" id="1.20.5.710">
    <property type="entry name" value="Single helix bin"/>
    <property type="match status" value="1"/>
</dbReference>
<dbReference type="HAMAP" id="MF_00368">
    <property type="entry name" value="Ribosomal_bL12"/>
    <property type="match status" value="1"/>
</dbReference>
<dbReference type="InterPro" id="IPR000206">
    <property type="entry name" value="Ribosomal_bL12"/>
</dbReference>
<dbReference type="InterPro" id="IPR013823">
    <property type="entry name" value="Ribosomal_bL12_C"/>
</dbReference>
<dbReference type="InterPro" id="IPR014719">
    <property type="entry name" value="Ribosomal_bL12_C/ClpS-like"/>
</dbReference>
<dbReference type="InterPro" id="IPR008932">
    <property type="entry name" value="Ribosomal_bL12_oligo"/>
</dbReference>
<dbReference type="InterPro" id="IPR036235">
    <property type="entry name" value="Ribosomal_bL12_oligo_N_sf"/>
</dbReference>
<dbReference type="NCBIfam" id="TIGR00855">
    <property type="entry name" value="L12"/>
    <property type="match status" value="1"/>
</dbReference>
<dbReference type="PANTHER" id="PTHR45987">
    <property type="entry name" value="39S RIBOSOMAL PROTEIN L12"/>
    <property type="match status" value="1"/>
</dbReference>
<dbReference type="PANTHER" id="PTHR45987:SF4">
    <property type="entry name" value="LARGE RIBOSOMAL SUBUNIT PROTEIN BL12M"/>
    <property type="match status" value="1"/>
</dbReference>
<dbReference type="Pfam" id="PF00542">
    <property type="entry name" value="Ribosomal_L12"/>
    <property type="match status" value="1"/>
</dbReference>
<dbReference type="Pfam" id="PF16320">
    <property type="entry name" value="Ribosomal_L12_N"/>
    <property type="match status" value="1"/>
</dbReference>
<dbReference type="SUPFAM" id="SSF54736">
    <property type="entry name" value="ClpS-like"/>
    <property type="match status" value="1"/>
</dbReference>
<dbReference type="SUPFAM" id="SSF48300">
    <property type="entry name" value="Ribosomal protein L7/12, oligomerisation (N-terminal) domain"/>
    <property type="match status" value="1"/>
</dbReference>
<name>RL7_ERYLH</name>
<organism>
    <name type="scientific">Erythrobacter litoralis (strain HTCC2594)</name>
    <dbReference type="NCBI Taxonomy" id="314225"/>
    <lineage>
        <taxon>Bacteria</taxon>
        <taxon>Pseudomonadati</taxon>
        <taxon>Pseudomonadota</taxon>
        <taxon>Alphaproteobacteria</taxon>
        <taxon>Sphingomonadales</taxon>
        <taxon>Erythrobacteraceae</taxon>
        <taxon>Erythrobacter/Porphyrobacter group</taxon>
        <taxon>Erythrobacter</taxon>
    </lineage>
</organism>
<protein>
    <recommendedName>
        <fullName evidence="1">Large ribosomal subunit protein bL12</fullName>
    </recommendedName>
    <alternativeName>
        <fullName evidence="2">50S ribosomal protein L7/L12</fullName>
    </alternativeName>
</protein>
<sequence>MADIKALVEELSKLTVLEAAELAKALEEEWGVSAAAAVAVAGPAGGGDAAAPAEEKDEFDVILTGDGGKKIQVIKEVRAITGLGLTEAKGLVEGAPKPIKEGVNKAEAEEIKGKIEAAGGTVELK</sequence>